<comment type="function">
    <text>Binds to WNT proteins and inhibits their activities. May be involved in mesoderm segmentation.</text>
</comment>
<comment type="subunit">
    <text evidence="1">Interacts with MYOC.</text>
</comment>
<comment type="subcellular location">
    <subcellularLocation>
        <location>Secreted</location>
    </subcellularLocation>
</comment>
<comment type="tissue specificity">
    <text>Expression highest in heart and lung. Lower in brain and eye.</text>
</comment>
<dbReference type="EMBL" id="AF122923">
    <property type="protein sequence ID" value="AAD25403.1"/>
    <property type="molecule type" value="mRNA"/>
</dbReference>
<dbReference type="EMBL" id="BC013268">
    <property type="protein sequence ID" value="AAH13268.1"/>
    <property type="molecule type" value="mRNA"/>
</dbReference>
<dbReference type="CCDS" id="CCDS24209.1"/>
<dbReference type="RefSeq" id="NP_036045.1">
    <property type="nucleotide sequence ID" value="NM_011915.2"/>
</dbReference>
<dbReference type="BMRB" id="Q9WUA1"/>
<dbReference type="SMR" id="Q9WUA1"/>
<dbReference type="FunCoup" id="Q9WUA1">
    <property type="interactions" value="209"/>
</dbReference>
<dbReference type="STRING" id="10090.ENSMUSP00000020439"/>
<dbReference type="GlyCosmos" id="Q9WUA1">
    <property type="glycosylation" value="2 sites, No reported glycans"/>
</dbReference>
<dbReference type="GlyGen" id="Q9WUA1">
    <property type="glycosylation" value="3 sites"/>
</dbReference>
<dbReference type="PhosphoSitePlus" id="Q9WUA1"/>
<dbReference type="PaxDb" id="10090-ENSMUSP00000020439"/>
<dbReference type="ProteomicsDB" id="299979"/>
<dbReference type="Antibodypedia" id="29209">
    <property type="antibodies" value="501 antibodies from 33 providers"/>
</dbReference>
<dbReference type="DNASU" id="24117"/>
<dbReference type="Ensembl" id="ENSMUST00000020439.11">
    <property type="protein sequence ID" value="ENSMUSP00000020439.5"/>
    <property type="gene ID" value="ENSMUSG00000020218.12"/>
</dbReference>
<dbReference type="GeneID" id="24117"/>
<dbReference type="KEGG" id="mmu:24117"/>
<dbReference type="UCSC" id="uc007hfj.2">
    <property type="organism name" value="mouse"/>
</dbReference>
<dbReference type="AGR" id="MGI:1344332"/>
<dbReference type="CTD" id="11197"/>
<dbReference type="MGI" id="MGI:1344332">
    <property type="gene designation" value="Wif1"/>
</dbReference>
<dbReference type="VEuPathDB" id="HostDB:ENSMUSG00000020218"/>
<dbReference type="eggNOG" id="KOG1225">
    <property type="taxonomic scope" value="Eukaryota"/>
</dbReference>
<dbReference type="GeneTree" id="ENSGT00940000160401"/>
<dbReference type="HOGENOM" id="CLU_041961_0_0_1"/>
<dbReference type="InParanoid" id="Q9WUA1"/>
<dbReference type="OMA" id="CKKALCY"/>
<dbReference type="OrthoDB" id="10266706at2759"/>
<dbReference type="PhylomeDB" id="Q9WUA1"/>
<dbReference type="BioGRID-ORCS" id="24117">
    <property type="hits" value="0 hits in 79 CRISPR screens"/>
</dbReference>
<dbReference type="ChiTaRS" id="Wif1">
    <property type="organism name" value="mouse"/>
</dbReference>
<dbReference type="PRO" id="PR:Q9WUA1"/>
<dbReference type="Proteomes" id="UP000000589">
    <property type="component" value="Chromosome 10"/>
</dbReference>
<dbReference type="RNAct" id="Q9WUA1">
    <property type="molecule type" value="protein"/>
</dbReference>
<dbReference type="Bgee" id="ENSMUSG00000020218">
    <property type="expression patterns" value="Expressed in molar tooth and 219 other cell types or tissues"/>
</dbReference>
<dbReference type="ExpressionAtlas" id="Q9WUA1">
    <property type="expression patterns" value="baseline and differential"/>
</dbReference>
<dbReference type="GO" id="GO:0005576">
    <property type="term" value="C:extracellular region"/>
    <property type="evidence" value="ECO:0000304"/>
    <property type="project" value="Reactome"/>
</dbReference>
<dbReference type="GO" id="GO:0017147">
    <property type="term" value="F:Wnt-protein binding"/>
    <property type="evidence" value="ECO:0000266"/>
    <property type="project" value="MGI"/>
</dbReference>
<dbReference type="GO" id="GO:0030178">
    <property type="term" value="P:negative regulation of Wnt signaling pathway"/>
    <property type="evidence" value="ECO:0000266"/>
    <property type="project" value="MGI"/>
</dbReference>
<dbReference type="GO" id="GO:0045600">
    <property type="term" value="P:positive regulation of fat cell differentiation"/>
    <property type="evidence" value="ECO:0000314"/>
    <property type="project" value="MGI"/>
</dbReference>
<dbReference type="GO" id="GO:0016055">
    <property type="term" value="P:Wnt signaling pathway"/>
    <property type="evidence" value="ECO:0007669"/>
    <property type="project" value="UniProtKB-KW"/>
</dbReference>
<dbReference type="CDD" id="cd00054">
    <property type="entry name" value="EGF_CA"/>
    <property type="match status" value="2"/>
</dbReference>
<dbReference type="FunFam" id="2.60.40.2170:FF:000001">
    <property type="entry name" value="WNT inhibitory factor 1"/>
    <property type="match status" value="1"/>
</dbReference>
<dbReference type="FunFam" id="2.10.25.10:FF:000276">
    <property type="entry name" value="Wnt inhibitory factor 1"/>
    <property type="match status" value="1"/>
</dbReference>
<dbReference type="FunFam" id="2.10.25.10:FF:000295">
    <property type="entry name" value="Wnt inhibitory factor 1"/>
    <property type="match status" value="1"/>
</dbReference>
<dbReference type="Gene3D" id="2.10.25.10">
    <property type="entry name" value="Laminin"/>
    <property type="match status" value="3"/>
</dbReference>
<dbReference type="Gene3D" id="2.60.40.2170">
    <property type="entry name" value="Wnt, WIF domain"/>
    <property type="match status" value="1"/>
</dbReference>
<dbReference type="InterPro" id="IPR050969">
    <property type="entry name" value="Dev_Signal_Modulators"/>
</dbReference>
<dbReference type="InterPro" id="IPR013032">
    <property type="entry name" value="EGF-like_CS"/>
</dbReference>
<dbReference type="InterPro" id="IPR000742">
    <property type="entry name" value="EGF-like_dom"/>
</dbReference>
<dbReference type="InterPro" id="IPR013111">
    <property type="entry name" value="EGF_extracell"/>
</dbReference>
<dbReference type="InterPro" id="IPR003306">
    <property type="entry name" value="WIF"/>
</dbReference>
<dbReference type="InterPro" id="IPR038677">
    <property type="entry name" value="WIF_sf"/>
</dbReference>
<dbReference type="InterPro" id="IPR013309">
    <property type="entry name" value="Wnt-inh"/>
</dbReference>
<dbReference type="PANTHER" id="PTHR14949">
    <property type="entry name" value="EGF-LIKE-DOMAIN, MULTIPLE 7, 8"/>
    <property type="match status" value="1"/>
</dbReference>
<dbReference type="PANTHER" id="PTHR14949:SF32">
    <property type="entry name" value="WNT INHIBITORY FACTOR 1"/>
    <property type="match status" value="1"/>
</dbReference>
<dbReference type="Pfam" id="PF07974">
    <property type="entry name" value="EGF_2"/>
    <property type="match status" value="1"/>
</dbReference>
<dbReference type="Pfam" id="PF21700">
    <property type="entry name" value="EGF_DL_JAG"/>
    <property type="match status" value="1"/>
</dbReference>
<dbReference type="Pfam" id="PF12661">
    <property type="entry name" value="hEGF"/>
    <property type="match status" value="3"/>
</dbReference>
<dbReference type="Pfam" id="PF02019">
    <property type="entry name" value="WIF"/>
    <property type="match status" value="1"/>
</dbReference>
<dbReference type="PRINTS" id="PR01901">
    <property type="entry name" value="WIFPROTEIN"/>
</dbReference>
<dbReference type="SMART" id="SM00181">
    <property type="entry name" value="EGF"/>
    <property type="match status" value="5"/>
</dbReference>
<dbReference type="SMART" id="SM00469">
    <property type="entry name" value="WIF"/>
    <property type="match status" value="1"/>
</dbReference>
<dbReference type="PROSITE" id="PS00022">
    <property type="entry name" value="EGF_1"/>
    <property type="match status" value="5"/>
</dbReference>
<dbReference type="PROSITE" id="PS01186">
    <property type="entry name" value="EGF_2"/>
    <property type="match status" value="4"/>
</dbReference>
<dbReference type="PROSITE" id="PS50026">
    <property type="entry name" value="EGF_3"/>
    <property type="match status" value="5"/>
</dbReference>
<dbReference type="PROSITE" id="PS50814">
    <property type="entry name" value="WIF"/>
    <property type="match status" value="1"/>
</dbReference>
<organism>
    <name type="scientific">Mus musculus</name>
    <name type="common">Mouse</name>
    <dbReference type="NCBI Taxonomy" id="10090"/>
    <lineage>
        <taxon>Eukaryota</taxon>
        <taxon>Metazoa</taxon>
        <taxon>Chordata</taxon>
        <taxon>Craniata</taxon>
        <taxon>Vertebrata</taxon>
        <taxon>Euteleostomi</taxon>
        <taxon>Mammalia</taxon>
        <taxon>Eutheria</taxon>
        <taxon>Euarchontoglires</taxon>
        <taxon>Glires</taxon>
        <taxon>Rodentia</taxon>
        <taxon>Myomorpha</taxon>
        <taxon>Muroidea</taxon>
        <taxon>Muridae</taxon>
        <taxon>Murinae</taxon>
        <taxon>Mus</taxon>
        <taxon>Mus</taxon>
    </lineage>
</organism>
<reference key="1">
    <citation type="journal article" date="1999" name="Nature">
        <title>A new secreted protein that binds to Wnt proteins and inhibits their activities.</title>
        <authorList>
            <person name="Hsieh J.-C."/>
            <person name="Kodjabachian L."/>
            <person name="Rebbert M.L."/>
            <person name="Rattner A."/>
            <person name="Smallwood P.M."/>
            <person name="Samos C.H."/>
            <person name="Nusse R."/>
            <person name="Dawid I.B."/>
            <person name="Nathans J."/>
        </authorList>
    </citation>
    <scope>NUCLEOTIDE SEQUENCE [MRNA]</scope>
</reference>
<reference key="2">
    <citation type="journal article" date="2004" name="Genome Res.">
        <title>The status, quality, and expansion of the NIH full-length cDNA project: the Mammalian Gene Collection (MGC).</title>
        <authorList>
            <consortium name="The MGC Project Team"/>
        </authorList>
    </citation>
    <scope>NUCLEOTIDE SEQUENCE [LARGE SCALE MRNA]</scope>
    <source>
        <strain>Czech II</strain>
        <tissue>Mammary gland</tissue>
    </source>
</reference>
<keyword id="KW-0217">Developmental protein</keyword>
<keyword id="KW-1015">Disulfide bond</keyword>
<keyword id="KW-0245">EGF-like domain</keyword>
<keyword id="KW-0325">Glycoprotein</keyword>
<keyword id="KW-1185">Reference proteome</keyword>
<keyword id="KW-0677">Repeat</keyword>
<keyword id="KW-0964">Secreted</keyword>
<keyword id="KW-0732">Signal</keyword>
<keyword id="KW-0879">Wnt signaling pathway</keyword>
<feature type="signal peptide" evidence="2">
    <location>
        <begin position="1"/>
        <end position="28"/>
    </location>
</feature>
<feature type="chain" id="PRO_0000007776" description="Wnt inhibitory factor 1">
    <location>
        <begin position="29"/>
        <end position="379"/>
    </location>
</feature>
<feature type="domain" description="WIF" evidence="4">
    <location>
        <begin position="38"/>
        <end position="177"/>
    </location>
</feature>
<feature type="domain" description="EGF-like 1" evidence="3">
    <location>
        <begin position="178"/>
        <end position="210"/>
    </location>
</feature>
<feature type="domain" description="EGF-like 2" evidence="3">
    <location>
        <begin position="211"/>
        <end position="242"/>
    </location>
</feature>
<feature type="domain" description="EGF-like 3" evidence="3">
    <location>
        <begin position="243"/>
        <end position="271"/>
    </location>
</feature>
<feature type="domain" description="EGF-like 4" evidence="3">
    <location>
        <begin position="274"/>
        <end position="306"/>
    </location>
</feature>
<feature type="domain" description="EGF-like 5" evidence="3">
    <location>
        <begin position="307"/>
        <end position="338"/>
    </location>
</feature>
<feature type="region of interest" description="Disordered" evidence="5">
    <location>
        <begin position="348"/>
        <end position="379"/>
    </location>
</feature>
<feature type="compositionally biased region" description="Basic and acidic residues" evidence="5">
    <location>
        <begin position="356"/>
        <end position="373"/>
    </location>
</feature>
<feature type="glycosylation site" description="N-linked (GlcNAc...) asparagine" evidence="2">
    <location>
        <position position="88"/>
    </location>
</feature>
<feature type="glycosylation site" description="N-linked (GlcNAc...) asparagine" evidence="2">
    <location>
        <position position="245"/>
    </location>
</feature>
<feature type="disulfide bond" evidence="1">
    <location>
        <begin position="140"/>
        <end position="177"/>
    </location>
</feature>
<feature type="disulfide bond" evidence="1">
    <location>
        <begin position="182"/>
        <end position="192"/>
    </location>
</feature>
<feature type="disulfide bond" evidence="1">
    <location>
        <begin position="186"/>
        <end position="198"/>
    </location>
</feature>
<feature type="disulfide bond" evidence="1">
    <location>
        <begin position="200"/>
        <end position="209"/>
    </location>
</feature>
<feature type="disulfide bond" evidence="1">
    <location>
        <begin position="214"/>
        <end position="224"/>
    </location>
</feature>
<feature type="disulfide bond" evidence="1">
    <location>
        <begin position="218"/>
        <end position="230"/>
    </location>
</feature>
<feature type="disulfide bond" evidence="1">
    <location>
        <begin position="232"/>
        <end position="241"/>
    </location>
</feature>
<feature type="disulfide bond" evidence="1">
    <location>
        <begin position="246"/>
        <end position="256"/>
    </location>
</feature>
<feature type="disulfide bond" evidence="1">
    <location>
        <begin position="250"/>
        <end position="262"/>
    </location>
</feature>
<feature type="disulfide bond" evidence="1">
    <location>
        <begin position="278"/>
        <end position="288"/>
    </location>
</feature>
<feature type="disulfide bond" evidence="1">
    <location>
        <begin position="282"/>
        <end position="294"/>
    </location>
</feature>
<feature type="disulfide bond" evidence="1">
    <location>
        <begin position="296"/>
        <end position="305"/>
    </location>
</feature>
<feature type="disulfide bond" evidence="1">
    <location>
        <begin position="310"/>
        <end position="320"/>
    </location>
</feature>
<feature type="disulfide bond" evidence="1">
    <location>
        <begin position="314"/>
        <end position="326"/>
    </location>
</feature>
<feature type="disulfide bond" evidence="1">
    <location>
        <begin position="328"/>
        <end position="337"/>
    </location>
</feature>
<gene>
    <name type="primary">Wif1</name>
</gene>
<proteinExistence type="evidence at transcript level"/>
<accession>Q9WUA1</accession>
<evidence type="ECO:0000250" key="1"/>
<evidence type="ECO:0000255" key="2"/>
<evidence type="ECO:0000255" key="3">
    <source>
        <dbReference type="PROSITE-ProRule" id="PRU00076"/>
    </source>
</evidence>
<evidence type="ECO:0000255" key="4">
    <source>
        <dbReference type="PROSITE-ProRule" id="PRU00222"/>
    </source>
</evidence>
<evidence type="ECO:0000256" key="5">
    <source>
        <dbReference type="SAM" id="MobiDB-lite"/>
    </source>
</evidence>
<protein>
    <recommendedName>
        <fullName>Wnt inhibitory factor 1</fullName>
        <shortName>WIF-1</shortName>
    </recommendedName>
</protein>
<name>WIF1_MOUSE</name>
<sequence length="379" mass="41590">MARRRAFPAFALRLWSILPCLLLLRADAGQPPEESLYLWIDAHQARVLIGFEEDILIVSEGKMAPFTHDFRKAQQRMPAIPVNIHSMNFTWQAAGQAEYFYEFLSLRSLDKGIMADPTVNVPLLGTVPHKASVVQVGFPCLGKQDGVAAFEVNVIVMNSEGNTILRTPQNAIFFKTCQQAECPGGCRNGGFCNERRVCECPDGFYGPHCEKALCIPRCMNGGLCVTPGFCICPPGFYGVNCDKANCSTTCFNGGTCFYPGKCICPPGLEGEQCELSKCPQPCRNGGKCIGKSKCKCPKGYQGDLCSKPVCEPGCGAHGTCHEPNKCQCREGWHGRHCNKRYGASLMHAPRPAGAGLERHTPSLKKAEDRRDPPESNYIW</sequence>